<organism>
    <name type="scientific">Aspergillus oryzae (strain ATCC 42149 / RIB 40)</name>
    <name type="common">Yellow koji mold</name>
    <dbReference type="NCBI Taxonomy" id="510516"/>
    <lineage>
        <taxon>Eukaryota</taxon>
        <taxon>Fungi</taxon>
        <taxon>Dikarya</taxon>
        <taxon>Ascomycota</taxon>
        <taxon>Pezizomycotina</taxon>
        <taxon>Eurotiomycetes</taxon>
        <taxon>Eurotiomycetidae</taxon>
        <taxon>Eurotiales</taxon>
        <taxon>Aspergillaceae</taxon>
        <taxon>Aspergillus</taxon>
        <taxon>Aspergillus subgen. Circumdati</taxon>
    </lineage>
</organism>
<proteinExistence type="inferred from homology"/>
<feature type="transit peptide" description="Mitochondrion" evidence="2">
    <location>
        <begin position="1"/>
        <end status="unknown"/>
    </location>
</feature>
<feature type="chain" id="PRO_0000343115" description="Mitochondrial escape protein 2">
    <location>
        <begin status="unknown"/>
        <end position="864"/>
    </location>
</feature>
<feature type="topological domain" description="Mitochondrial matrix" evidence="2">
    <location>
        <begin status="unknown"/>
        <end position="330"/>
    </location>
</feature>
<feature type="transmembrane region" description="Helical" evidence="2">
    <location>
        <begin position="331"/>
        <end position="351"/>
    </location>
</feature>
<feature type="topological domain" description="Mitochondrial intermembrane" evidence="2">
    <location>
        <begin position="352"/>
        <end position="864"/>
    </location>
</feature>
<feature type="domain" description="RRM" evidence="3">
    <location>
        <begin position="223"/>
        <end position="315"/>
    </location>
</feature>
<reference key="1">
    <citation type="journal article" date="2005" name="Nature">
        <title>Genome sequencing and analysis of Aspergillus oryzae.</title>
        <authorList>
            <person name="Machida M."/>
            <person name="Asai K."/>
            <person name="Sano M."/>
            <person name="Tanaka T."/>
            <person name="Kumagai T."/>
            <person name="Terai G."/>
            <person name="Kusumoto K."/>
            <person name="Arima T."/>
            <person name="Akita O."/>
            <person name="Kashiwagi Y."/>
            <person name="Abe K."/>
            <person name="Gomi K."/>
            <person name="Horiuchi H."/>
            <person name="Kitamoto K."/>
            <person name="Kobayashi T."/>
            <person name="Takeuchi M."/>
            <person name="Denning D.W."/>
            <person name="Galagan J.E."/>
            <person name="Nierman W.C."/>
            <person name="Yu J."/>
            <person name="Archer D.B."/>
            <person name="Bennett J.W."/>
            <person name="Bhatnagar D."/>
            <person name="Cleveland T.E."/>
            <person name="Fedorova N.D."/>
            <person name="Gotoh O."/>
            <person name="Horikawa H."/>
            <person name="Hosoyama A."/>
            <person name="Ichinomiya M."/>
            <person name="Igarashi R."/>
            <person name="Iwashita K."/>
            <person name="Juvvadi P.R."/>
            <person name="Kato M."/>
            <person name="Kato Y."/>
            <person name="Kin T."/>
            <person name="Kokubun A."/>
            <person name="Maeda H."/>
            <person name="Maeyama N."/>
            <person name="Maruyama J."/>
            <person name="Nagasaki H."/>
            <person name="Nakajima T."/>
            <person name="Oda K."/>
            <person name="Okada K."/>
            <person name="Paulsen I."/>
            <person name="Sakamoto K."/>
            <person name="Sawano T."/>
            <person name="Takahashi M."/>
            <person name="Takase K."/>
            <person name="Terabayashi Y."/>
            <person name="Wortman J.R."/>
            <person name="Yamada O."/>
            <person name="Yamagata Y."/>
            <person name="Anazawa H."/>
            <person name="Hata Y."/>
            <person name="Koide Y."/>
            <person name="Komori T."/>
            <person name="Koyama Y."/>
            <person name="Minetoki T."/>
            <person name="Suharnan S."/>
            <person name="Tanaka A."/>
            <person name="Isono K."/>
            <person name="Kuhara S."/>
            <person name="Ogasawara N."/>
            <person name="Kikuchi H."/>
        </authorList>
    </citation>
    <scope>NUCLEOTIDE SEQUENCE [LARGE SCALE GENOMIC DNA]</scope>
    <source>
        <strain>ATCC 42149 / RIB 40</strain>
    </source>
</reference>
<name>YME2_ASPOR</name>
<evidence type="ECO:0000250" key="1"/>
<evidence type="ECO:0000255" key="2"/>
<evidence type="ECO:0000255" key="3">
    <source>
        <dbReference type="PROSITE-ProRule" id="PRU00176"/>
    </source>
</evidence>
<evidence type="ECO:0000305" key="4"/>
<accession>Q2UBI2</accession>
<sequence>MDDGGNDVDSAEDGDPCDASCPLLMSPSKLASNCFNSASARSSRVNVRGCDTSFRWGRPPPSLFAAKSSLARLSSASHASYLETGHIDLKKNEGLLFINNIFPRKLQWVLEGSLRASRPYEEALKRIDRPHLAASDPLRIIRRVFPHELEVEIKEVVPRFREGGAFVKYTRNEGVKDTDIETAVKDHLEKHPIRPWFNPFQQVKVASVLGRPWIEDLYRIPSPRLRVEFLPGSANDLANDPTTESLYSLFRSYGKLRDIERQPSDSKILPRYAYVEFARPKFAVMAKNCMHGFTIAEKEGGGKFGTRLKINYERKIKLSMIKDWILSHPRIVIPAVAALIAAITVTVFDPIRTFFIKMKIKATLHVEENSVLGWIRKQVSKANIIGLGVVASDPRGLTAIWEDRQGDISQLQSWLTENTETFIIIHGPRGSGKRELVLDQALENYKYKVVIDCKQIQDARGDTAKIARAAGQVGYRPVFSWMNSISSFIDLAAQGMIGTKAGFSETLDAQLSNIWQSTATALKGVILDSRKKNDKDAHLTDEEYLEAHPELRPVVVIDNFLHNASEDNVVYEKITEWAAGLTSANIAHVIFLTTDVSFAKPLSKALPNSVFRTISLGDCSLEVGRRFVLNHLADEARTGDKPPRSEEYLEDLDSCIEILGGRVTDLEFMAHRIEAGETPNGAVNRIIEQSTSEILKMFILSTNTEAQWSHEQVWHLIKMLANSKEGSLPYNQVLLSDLFKENGEVALQALEQAELISVSSINGCPETVKPGKPVYRAVFKKLTENKTLSSRLDLEILSRLISKENKSIGKYEEELRLLGSLPKQPRELTSRIQWLLQKVYNSQNKISRYETESAFLQMILRRGH</sequence>
<protein>
    <recommendedName>
        <fullName>Mitochondrial escape protein 2</fullName>
    </recommendedName>
</protein>
<dbReference type="EMBL" id="BA000052">
    <property type="protein sequence ID" value="BAE61083.1"/>
    <property type="molecule type" value="Genomic_DNA"/>
</dbReference>
<dbReference type="EnsemblFungi" id="BAE61083">
    <property type="protein sequence ID" value="BAE61083"/>
    <property type="gene ID" value="AO090012000987"/>
</dbReference>
<dbReference type="VEuPathDB" id="FungiDB:AO090012000987"/>
<dbReference type="HOGENOM" id="CLU_007861_1_0_1"/>
<dbReference type="OMA" id="WTPEQAW"/>
<dbReference type="Proteomes" id="UP000006564">
    <property type="component" value="Chromosome 4"/>
</dbReference>
<dbReference type="GO" id="GO:0005743">
    <property type="term" value="C:mitochondrial inner membrane"/>
    <property type="evidence" value="ECO:0007669"/>
    <property type="project" value="UniProtKB-SubCell"/>
</dbReference>
<dbReference type="GO" id="GO:0003723">
    <property type="term" value="F:RNA binding"/>
    <property type="evidence" value="ECO:0007669"/>
    <property type="project" value="UniProtKB-KW"/>
</dbReference>
<dbReference type="GO" id="GO:0000002">
    <property type="term" value="P:mitochondrial genome maintenance"/>
    <property type="evidence" value="ECO:0007669"/>
    <property type="project" value="InterPro"/>
</dbReference>
<dbReference type="GO" id="GO:0006397">
    <property type="term" value="P:mRNA processing"/>
    <property type="evidence" value="ECO:0007669"/>
    <property type="project" value="UniProtKB-KW"/>
</dbReference>
<dbReference type="CDD" id="cd12433">
    <property type="entry name" value="RRM_Yme2p_like"/>
    <property type="match status" value="1"/>
</dbReference>
<dbReference type="FunFam" id="3.30.70.330:FF:000959">
    <property type="entry name" value="Mitochondrial escape protein 2"/>
    <property type="match status" value="1"/>
</dbReference>
<dbReference type="Gene3D" id="3.30.70.330">
    <property type="match status" value="1"/>
</dbReference>
<dbReference type="Gene3D" id="3.40.50.300">
    <property type="entry name" value="P-loop containing nucleotide triphosphate hydrolases"/>
    <property type="match status" value="1"/>
</dbReference>
<dbReference type="InterPro" id="IPR018850">
    <property type="entry name" value="Mt_escape_2_C"/>
</dbReference>
<dbReference type="InterPro" id="IPR012677">
    <property type="entry name" value="Nucleotide-bd_a/b_plait_sf"/>
</dbReference>
<dbReference type="InterPro" id="IPR027417">
    <property type="entry name" value="P-loop_NTPase"/>
</dbReference>
<dbReference type="InterPro" id="IPR035979">
    <property type="entry name" value="RBD_domain_sf"/>
</dbReference>
<dbReference type="InterPro" id="IPR000504">
    <property type="entry name" value="RRM_dom"/>
</dbReference>
<dbReference type="InterPro" id="IPR039627">
    <property type="entry name" value="Yme2_C"/>
</dbReference>
<dbReference type="InterPro" id="IPR034260">
    <property type="entry name" value="Yme2_RRM"/>
</dbReference>
<dbReference type="PANTHER" id="PTHR32198">
    <property type="entry name" value="MITOCHONDRIAL ESCAPE PROTEIN 2"/>
    <property type="match status" value="1"/>
</dbReference>
<dbReference type="PANTHER" id="PTHR32198:SF2">
    <property type="entry name" value="MITOCHONDRIAL ESCAPE PROTEIN 2"/>
    <property type="match status" value="1"/>
</dbReference>
<dbReference type="Pfam" id="PF10443">
    <property type="entry name" value="RNA12"/>
    <property type="match status" value="1"/>
</dbReference>
<dbReference type="Pfam" id="PF00076">
    <property type="entry name" value="RRM_1"/>
    <property type="match status" value="1"/>
</dbReference>
<dbReference type="SUPFAM" id="SSF54928">
    <property type="entry name" value="RNA-binding domain, RBD"/>
    <property type="match status" value="1"/>
</dbReference>
<dbReference type="PROSITE" id="PS50102">
    <property type="entry name" value="RRM"/>
    <property type="match status" value="1"/>
</dbReference>
<comment type="function">
    <text evidence="1">Plays a role in maintaining the mitochondrial genome and in controlling the mtDNA escape. Involved in the regulation of mtDNA nucleotide structure and number. May have a dispensable role in early maturation of pre-rRNA (By similarity).</text>
</comment>
<comment type="subcellular location">
    <subcellularLocation>
        <location evidence="1">Mitochondrion inner membrane</location>
        <topology evidence="1">Single-pass membrane protein</topology>
    </subcellularLocation>
</comment>
<comment type="similarity">
    <text evidence="4">Belongs to the YME2 family.</text>
</comment>
<gene>
    <name type="primary">yme2</name>
    <name type="ORF">AO090012000987</name>
</gene>
<keyword id="KW-0472">Membrane</keyword>
<keyword id="KW-0496">Mitochondrion</keyword>
<keyword id="KW-0999">Mitochondrion inner membrane</keyword>
<keyword id="KW-0507">mRNA processing</keyword>
<keyword id="KW-1185">Reference proteome</keyword>
<keyword id="KW-0694">RNA-binding</keyword>
<keyword id="KW-0809">Transit peptide</keyword>
<keyword id="KW-0812">Transmembrane</keyword>
<keyword id="KW-1133">Transmembrane helix</keyword>